<dbReference type="EC" id="7.1.2.2" evidence="1"/>
<dbReference type="EMBL" id="CP000009">
    <property type="protein sequence ID" value="AAW61903.1"/>
    <property type="molecule type" value="Genomic_DNA"/>
</dbReference>
<dbReference type="RefSeq" id="WP_011253679.1">
    <property type="nucleotide sequence ID" value="NC_006677.1"/>
</dbReference>
<dbReference type="SMR" id="Q5FNZ3"/>
<dbReference type="STRING" id="290633.GOX2167"/>
<dbReference type="KEGG" id="gox:GOX2167"/>
<dbReference type="eggNOG" id="COG0055">
    <property type="taxonomic scope" value="Bacteria"/>
</dbReference>
<dbReference type="HOGENOM" id="CLU_022398_0_2_5"/>
<dbReference type="Proteomes" id="UP000006375">
    <property type="component" value="Chromosome"/>
</dbReference>
<dbReference type="GO" id="GO:0005886">
    <property type="term" value="C:plasma membrane"/>
    <property type="evidence" value="ECO:0007669"/>
    <property type="project" value="UniProtKB-SubCell"/>
</dbReference>
<dbReference type="GO" id="GO:0045259">
    <property type="term" value="C:proton-transporting ATP synthase complex"/>
    <property type="evidence" value="ECO:0007669"/>
    <property type="project" value="UniProtKB-KW"/>
</dbReference>
<dbReference type="GO" id="GO:0005524">
    <property type="term" value="F:ATP binding"/>
    <property type="evidence" value="ECO:0007669"/>
    <property type="project" value="UniProtKB-UniRule"/>
</dbReference>
<dbReference type="GO" id="GO:0016887">
    <property type="term" value="F:ATP hydrolysis activity"/>
    <property type="evidence" value="ECO:0007669"/>
    <property type="project" value="InterPro"/>
</dbReference>
<dbReference type="GO" id="GO:0046933">
    <property type="term" value="F:proton-transporting ATP synthase activity, rotational mechanism"/>
    <property type="evidence" value="ECO:0007669"/>
    <property type="project" value="UniProtKB-UniRule"/>
</dbReference>
<dbReference type="CDD" id="cd18110">
    <property type="entry name" value="ATP-synt_F1_beta_C"/>
    <property type="match status" value="1"/>
</dbReference>
<dbReference type="CDD" id="cd18115">
    <property type="entry name" value="ATP-synt_F1_beta_N"/>
    <property type="match status" value="1"/>
</dbReference>
<dbReference type="CDD" id="cd01133">
    <property type="entry name" value="F1-ATPase_beta_CD"/>
    <property type="match status" value="1"/>
</dbReference>
<dbReference type="Gene3D" id="2.40.10.170">
    <property type="match status" value="1"/>
</dbReference>
<dbReference type="Gene3D" id="1.10.1140.10">
    <property type="entry name" value="Bovine Mitochondrial F1-atpase, Atp Synthase Beta Chain, Chain D, domain 3"/>
    <property type="match status" value="1"/>
</dbReference>
<dbReference type="Gene3D" id="3.40.50.300">
    <property type="entry name" value="P-loop containing nucleotide triphosphate hydrolases"/>
    <property type="match status" value="1"/>
</dbReference>
<dbReference type="HAMAP" id="MF_01347">
    <property type="entry name" value="ATP_synth_beta_bact"/>
    <property type="match status" value="1"/>
</dbReference>
<dbReference type="InterPro" id="IPR003593">
    <property type="entry name" value="AAA+_ATPase"/>
</dbReference>
<dbReference type="InterPro" id="IPR055190">
    <property type="entry name" value="ATP-synt_VA_C"/>
</dbReference>
<dbReference type="InterPro" id="IPR005722">
    <property type="entry name" value="ATP_synth_F1_bsu"/>
</dbReference>
<dbReference type="InterPro" id="IPR020003">
    <property type="entry name" value="ATPase_a/bsu_AS"/>
</dbReference>
<dbReference type="InterPro" id="IPR050053">
    <property type="entry name" value="ATPase_alpha/beta_chains"/>
</dbReference>
<dbReference type="InterPro" id="IPR004100">
    <property type="entry name" value="ATPase_F1/V1/A1_a/bsu_N"/>
</dbReference>
<dbReference type="InterPro" id="IPR036121">
    <property type="entry name" value="ATPase_F1/V1/A1_a/bsu_N_sf"/>
</dbReference>
<dbReference type="InterPro" id="IPR000194">
    <property type="entry name" value="ATPase_F1/V1/A1_a/bsu_nucl-bd"/>
</dbReference>
<dbReference type="InterPro" id="IPR024034">
    <property type="entry name" value="ATPase_F1/V1_b/a_C"/>
</dbReference>
<dbReference type="InterPro" id="IPR027417">
    <property type="entry name" value="P-loop_NTPase"/>
</dbReference>
<dbReference type="NCBIfam" id="TIGR01039">
    <property type="entry name" value="atpD"/>
    <property type="match status" value="1"/>
</dbReference>
<dbReference type="PANTHER" id="PTHR15184">
    <property type="entry name" value="ATP SYNTHASE"/>
    <property type="match status" value="1"/>
</dbReference>
<dbReference type="PANTHER" id="PTHR15184:SF71">
    <property type="entry name" value="ATP SYNTHASE SUBUNIT BETA, MITOCHONDRIAL"/>
    <property type="match status" value="1"/>
</dbReference>
<dbReference type="Pfam" id="PF00006">
    <property type="entry name" value="ATP-synt_ab"/>
    <property type="match status" value="1"/>
</dbReference>
<dbReference type="Pfam" id="PF02874">
    <property type="entry name" value="ATP-synt_ab_N"/>
    <property type="match status" value="1"/>
</dbReference>
<dbReference type="Pfam" id="PF22919">
    <property type="entry name" value="ATP-synt_VA_C"/>
    <property type="match status" value="1"/>
</dbReference>
<dbReference type="SMART" id="SM00382">
    <property type="entry name" value="AAA"/>
    <property type="match status" value="1"/>
</dbReference>
<dbReference type="SUPFAM" id="SSF47917">
    <property type="entry name" value="C-terminal domain of alpha and beta subunits of F1 ATP synthase"/>
    <property type="match status" value="1"/>
</dbReference>
<dbReference type="SUPFAM" id="SSF50615">
    <property type="entry name" value="N-terminal domain of alpha and beta subunits of F1 ATP synthase"/>
    <property type="match status" value="1"/>
</dbReference>
<dbReference type="SUPFAM" id="SSF52540">
    <property type="entry name" value="P-loop containing nucleoside triphosphate hydrolases"/>
    <property type="match status" value="1"/>
</dbReference>
<dbReference type="PROSITE" id="PS00152">
    <property type="entry name" value="ATPASE_ALPHA_BETA"/>
    <property type="match status" value="1"/>
</dbReference>
<organism>
    <name type="scientific">Gluconobacter oxydans (strain 621H)</name>
    <name type="common">Gluconobacter suboxydans</name>
    <dbReference type="NCBI Taxonomy" id="290633"/>
    <lineage>
        <taxon>Bacteria</taxon>
        <taxon>Pseudomonadati</taxon>
        <taxon>Pseudomonadota</taxon>
        <taxon>Alphaproteobacteria</taxon>
        <taxon>Acetobacterales</taxon>
        <taxon>Acetobacteraceae</taxon>
        <taxon>Gluconobacter</taxon>
    </lineage>
</organism>
<reference key="1">
    <citation type="journal article" date="2005" name="Nat. Biotechnol.">
        <title>Complete genome sequence of the acetic acid bacterium Gluconobacter oxydans.</title>
        <authorList>
            <person name="Prust C."/>
            <person name="Hoffmeister M."/>
            <person name="Liesegang H."/>
            <person name="Wiezer A."/>
            <person name="Fricke W.F."/>
            <person name="Ehrenreich A."/>
            <person name="Gottschalk G."/>
            <person name="Deppenmeier U."/>
        </authorList>
    </citation>
    <scope>NUCLEOTIDE SEQUENCE [LARGE SCALE GENOMIC DNA]</scope>
    <source>
        <strain>621H</strain>
    </source>
</reference>
<keyword id="KW-0066">ATP synthesis</keyword>
<keyword id="KW-0067">ATP-binding</keyword>
<keyword id="KW-0997">Cell inner membrane</keyword>
<keyword id="KW-1003">Cell membrane</keyword>
<keyword id="KW-0139">CF(1)</keyword>
<keyword id="KW-0375">Hydrogen ion transport</keyword>
<keyword id="KW-0406">Ion transport</keyword>
<keyword id="KW-0472">Membrane</keyword>
<keyword id="KW-0547">Nucleotide-binding</keyword>
<keyword id="KW-1185">Reference proteome</keyword>
<keyword id="KW-1278">Translocase</keyword>
<keyword id="KW-0813">Transport</keyword>
<proteinExistence type="inferred from homology"/>
<accession>Q5FNZ3</accession>
<comment type="function">
    <text evidence="1">Produces ATP from ADP in the presence of a proton gradient across the membrane. The catalytic sites are hosted primarily by the beta subunits.</text>
</comment>
<comment type="catalytic activity">
    <reaction evidence="1">
        <text>ATP + H2O + 4 H(+)(in) = ADP + phosphate + 5 H(+)(out)</text>
        <dbReference type="Rhea" id="RHEA:57720"/>
        <dbReference type="ChEBI" id="CHEBI:15377"/>
        <dbReference type="ChEBI" id="CHEBI:15378"/>
        <dbReference type="ChEBI" id="CHEBI:30616"/>
        <dbReference type="ChEBI" id="CHEBI:43474"/>
        <dbReference type="ChEBI" id="CHEBI:456216"/>
        <dbReference type="EC" id="7.1.2.2"/>
    </reaction>
</comment>
<comment type="subunit">
    <text evidence="1">F-type ATPases have 2 components, CF(1) - the catalytic core - and CF(0) - the membrane proton channel. CF(1) has five subunits: alpha(3), beta(3), gamma(1), delta(1), epsilon(1). CF(0) has three main subunits: a(1), b(2) and c(9-12). The alpha and beta chains form an alternating ring which encloses part of the gamma chain. CF(1) is attached to CF(0) by a central stalk formed by the gamma and epsilon chains, while a peripheral stalk is formed by the delta and b chains.</text>
</comment>
<comment type="subcellular location">
    <subcellularLocation>
        <location evidence="1">Cell inner membrane</location>
        <topology evidence="1">Peripheral membrane protein</topology>
    </subcellularLocation>
</comment>
<comment type="similarity">
    <text evidence="1">Belongs to the ATPase alpha/beta chains family.</text>
</comment>
<sequence>MNLPAVTPAKSDTASPMGEIIAVREAVVDVRFAAGHLPEINSALEVAWDGGAPLILEVHSHLDPRTVRAVALMSTSGLARHVMVRATGEALRVPVGEAVVGRMLDVTGIPRDNGPALPADVPRRAIHSDPPAMQTENASTDIFETGVKVLDLLTPLAHGGKAAMFGGAGVGKTVLTMELIHAMAAKYQGLSIFTGVGERSREGHEMLSDMNGSGVIRHAVLVYGQMNEPPGARWRVPLTALAIAEYFRDEQHKNVLLLMDNIYRFVQAGSELSSLLGRLPSRVGYQSTLATEVGAVEERITSVAGAAVTAIQTVYVPADDFTDPAVTAIATHMDSQIVLSRDLAAQGFYPAVDPLASSSVLLDPLVVGDAHCEIAEQVRESLARLKSLQDVIALLGVEELGSDDRRTVTRARRLQRFLSQPFTVTEKFTGQPGRSVSLADTLAGCRAILDGETDDWAESSLYMVGTLDEARQKEQVARKAAAGAAV</sequence>
<gene>
    <name evidence="1" type="primary">atpD2</name>
    <name type="ordered locus">GOX2167</name>
</gene>
<feature type="chain" id="PRO_0000339531" description="ATP synthase subunit beta 2">
    <location>
        <begin position="1"/>
        <end position="486"/>
    </location>
</feature>
<feature type="binding site" evidence="1">
    <location>
        <begin position="166"/>
        <end position="173"/>
    </location>
    <ligand>
        <name>ATP</name>
        <dbReference type="ChEBI" id="CHEBI:30616"/>
    </ligand>
</feature>
<name>ATPB2_GLUOX</name>
<protein>
    <recommendedName>
        <fullName evidence="1">ATP synthase subunit beta 2</fullName>
        <ecNumber evidence="1">7.1.2.2</ecNumber>
    </recommendedName>
    <alternativeName>
        <fullName evidence="1">ATP synthase F1 sector subunit beta 2</fullName>
    </alternativeName>
    <alternativeName>
        <fullName evidence="1">F-ATPase subunit beta 2</fullName>
    </alternativeName>
</protein>
<evidence type="ECO:0000255" key="1">
    <source>
        <dbReference type="HAMAP-Rule" id="MF_01347"/>
    </source>
</evidence>